<gene>
    <name type="ordered locus">CCNA_02430</name>
</gene>
<dbReference type="EMBL" id="CP001340">
    <property type="protein sequence ID" value="ACL95895.1"/>
    <property type="molecule type" value="Genomic_DNA"/>
</dbReference>
<dbReference type="RefSeq" id="WP_010920203.1">
    <property type="nucleotide sequence ID" value="NC_011916.1"/>
</dbReference>
<dbReference type="RefSeq" id="YP_002517803.1">
    <property type="nucleotide sequence ID" value="NC_011916.1"/>
</dbReference>
<dbReference type="GeneID" id="7331664"/>
<dbReference type="KEGG" id="ccs:CCNA_02430"/>
<dbReference type="PATRIC" id="fig|565050.3.peg.2383"/>
<dbReference type="HOGENOM" id="CLU_112904_0_0_5"/>
<dbReference type="OrthoDB" id="9798434at2"/>
<dbReference type="PhylomeDB" id="B8GZA6"/>
<dbReference type="Proteomes" id="UP000001364">
    <property type="component" value="Chromosome"/>
</dbReference>
<dbReference type="HAMAP" id="MF_00678">
    <property type="entry name" value="UPF0262"/>
    <property type="match status" value="1"/>
</dbReference>
<dbReference type="InterPro" id="IPR008321">
    <property type="entry name" value="UCP032146"/>
</dbReference>
<dbReference type="NCBIfam" id="NF002769">
    <property type="entry name" value="PRK02853.1"/>
    <property type="match status" value="1"/>
</dbReference>
<dbReference type="Pfam" id="PF06793">
    <property type="entry name" value="UPF0262"/>
    <property type="match status" value="1"/>
</dbReference>
<dbReference type="PIRSF" id="PIRSF032146">
    <property type="entry name" value="UCP032146"/>
    <property type="match status" value="1"/>
</dbReference>
<proteinExistence type="inferred from homology"/>
<name>Y2430_CAUVN</name>
<sequence>MSTDARANHRIKSIEIDEESLAAASRDQEQERQVAIFDLLEGNYFEPAEAGDGPYDVRLSLIENRLAFDIASAGHARRHLLSLSPFRGVIKDYFLICDSYYSAIRNSSPQQIEALDMGRRGLHNEGSNLLRERLEGKVKTDLDTARRLFTLICALHWRG</sequence>
<feature type="chain" id="PRO_1000147709" description="UPF0262 protein CCNA_02430">
    <location>
        <begin position="1"/>
        <end position="159"/>
    </location>
</feature>
<comment type="similarity">
    <text evidence="1">Belongs to the UPF0262 family.</text>
</comment>
<reference key="1">
    <citation type="journal article" date="2010" name="J. Bacteriol.">
        <title>The genetic basis of laboratory adaptation in Caulobacter crescentus.</title>
        <authorList>
            <person name="Marks M.E."/>
            <person name="Castro-Rojas C.M."/>
            <person name="Teiling C."/>
            <person name="Du L."/>
            <person name="Kapatral V."/>
            <person name="Walunas T.L."/>
            <person name="Crosson S."/>
        </authorList>
    </citation>
    <scope>NUCLEOTIDE SEQUENCE [LARGE SCALE GENOMIC DNA]</scope>
    <source>
        <strain>NA1000 / CB15N</strain>
    </source>
</reference>
<evidence type="ECO:0000255" key="1">
    <source>
        <dbReference type="HAMAP-Rule" id="MF_00678"/>
    </source>
</evidence>
<organism>
    <name type="scientific">Caulobacter vibrioides (strain NA1000 / CB15N)</name>
    <name type="common">Caulobacter crescentus</name>
    <dbReference type="NCBI Taxonomy" id="565050"/>
    <lineage>
        <taxon>Bacteria</taxon>
        <taxon>Pseudomonadati</taxon>
        <taxon>Pseudomonadota</taxon>
        <taxon>Alphaproteobacteria</taxon>
        <taxon>Caulobacterales</taxon>
        <taxon>Caulobacteraceae</taxon>
        <taxon>Caulobacter</taxon>
    </lineage>
</organism>
<keyword id="KW-1185">Reference proteome</keyword>
<protein>
    <recommendedName>
        <fullName evidence="1">UPF0262 protein CCNA_02430</fullName>
    </recommendedName>
</protein>
<accession>B8GZA6</accession>